<protein>
    <recommendedName>
        <fullName evidence="1">Recombination-associated protein RdgC</fullName>
    </recommendedName>
</protein>
<sequence length="303" mass="34023">MLWFKNLMVYRLSREISLRAEEMEKQLASMAFTPCGSQDMAKMGWVPPMGSHSDALTHVANGQIVICARKEEKILPSPVIKQALEAKIAKLEAEQARKLKKTEKDSLKDEVLHSLLPRAFSRFSQTMMWIDTVNGLIMVDCASAKKAEDTLALLRKSLGSLPVVPLSMENPIELTLTEWVRSGSTAQGFQLLDEAELKSLLEDGGVIRAKKQDLTSEEITNHIEAGKVVTKLALDWQQRIQFVMCDDGSLKRLKFCDELRDQNEDIDREDFAQRFDADFILMTGELAALIQNLIEGLGGEAQR</sequence>
<feature type="chain" id="PRO_1000193276" description="Recombination-associated protein RdgC">
    <location>
        <begin position="1"/>
        <end position="303"/>
    </location>
</feature>
<evidence type="ECO:0000255" key="1">
    <source>
        <dbReference type="HAMAP-Rule" id="MF_00194"/>
    </source>
</evidence>
<reference key="1">
    <citation type="journal article" date="2009" name="PLoS Genet.">
        <title>Organised genome dynamics in the Escherichia coli species results in highly diverse adaptive paths.</title>
        <authorList>
            <person name="Touchon M."/>
            <person name="Hoede C."/>
            <person name="Tenaillon O."/>
            <person name="Barbe V."/>
            <person name="Baeriswyl S."/>
            <person name="Bidet P."/>
            <person name="Bingen E."/>
            <person name="Bonacorsi S."/>
            <person name="Bouchier C."/>
            <person name="Bouvet O."/>
            <person name="Calteau A."/>
            <person name="Chiapello H."/>
            <person name="Clermont O."/>
            <person name="Cruveiller S."/>
            <person name="Danchin A."/>
            <person name="Diard M."/>
            <person name="Dossat C."/>
            <person name="Karoui M.E."/>
            <person name="Frapy E."/>
            <person name="Garry L."/>
            <person name="Ghigo J.M."/>
            <person name="Gilles A.M."/>
            <person name="Johnson J."/>
            <person name="Le Bouguenec C."/>
            <person name="Lescat M."/>
            <person name="Mangenot S."/>
            <person name="Martinez-Jehanne V."/>
            <person name="Matic I."/>
            <person name="Nassif X."/>
            <person name="Oztas S."/>
            <person name="Petit M.A."/>
            <person name="Pichon C."/>
            <person name="Rouy Z."/>
            <person name="Ruf C.S."/>
            <person name="Schneider D."/>
            <person name="Tourret J."/>
            <person name="Vacherie B."/>
            <person name="Vallenet D."/>
            <person name="Medigue C."/>
            <person name="Rocha E.P.C."/>
            <person name="Denamur E."/>
        </authorList>
    </citation>
    <scope>NUCLEOTIDE SEQUENCE [LARGE SCALE GENOMIC DNA]</scope>
    <source>
        <strain>ED1a</strain>
    </source>
</reference>
<keyword id="KW-0963">Cytoplasm</keyword>
<keyword id="KW-0233">DNA recombination</keyword>
<organism>
    <name type="scientific">Escherichia coli O81 (strain ED1a)</name>
    <dbReference type="NCBI Taxonomy" id="585397"/>
    <lineage>
        <taxon>Bacteria</taxon>
        <taxon>Pseudomonadati</taxon>
        <taxon>Pseudomonadota</taxon>
        <taxon>Gammaproteobacteria</taxon>
        <taxon>Enterobacterales</taxon>
        <taxon>Enterobacteriaceae</taxon>
        <taxon>Escherichia</taxon>
    </lineage>
</organism>
<dbReference type="EMBL" id="CU928162">
    <property type="protein sequence ID" value="CAR06626.1"/>
    <property type="molecule type" value="Genomic_DNA"/>
</dbReference>
<dbReference type="RefSeq" id="WP_001366457.1">
    <property type="nucleotide sequence ID" value="NC_011745.1"/>
</dbReference>
<dbReference type="SMR" id="B7MPF4"/>
<dbReference type="KEGG" id="ecq:ECED1_0416"/>
<dbReference type="HOGENOM" id="CLU_052038_1_1_6"/>
<dbReference type="Proteomes" id="UP000000748">
    <property type="component" value="Chromosome"/>
</dbReference>
<dbReference type="GO" id="GO:0043590">
    <property type="term" value="C:bacterial nucleoid"/>
    <property type="evidence" value="ECO:0007669"/>
    <property type="project" value="TreeGrafter"/>
</dbReference>
<dbReference type="GO" id="GO:0005737">
    <property type="term" value="C:cytoplasm"/>
    <property type="evidence" value="ECO:0007669"/>
    <property type="project" value="UniProtKB-UniRule"/>
</dbReference>
<dbReference type="GO" id="GO:0003690">
    <property type="term" value="F:double-stranded DNA binding"/>
    <property type="evidence" value="ECO:0007669"/>
    <property type="project" value="TreeGrafter"/>
</dbReference>
<dbReference type="GO" id="GO:0006310">
    <property type="term" value="P:DNA recombination"/>
    <property type="evidence" value="ECO:0007669"/>
    <property type="project" value="UniProtKB-UniRule"/>
</dbReference>
<dbReference type="GO" id="GO:0000018">
    <property type="term" value="P:regulation of DNA recombination"/>
    <property type="evidence" value="ECO:0007669"/>
    <property type="project" value="TreeGrafter"/>
</dbReference>
<dbReference type="HAMAP" id="MF_00194">
    <property type="entry name" value="RdgC"/>
    <property type="match status" value="1"/>
</dbReference>
<dbReference type="InterPro" id="IPR007476">
    <property type="entry name" value="RdgC"/>
</dbReference>
<dbReference type="NCBIfam" id="NF001460">
    <property type="entry name" value="PRK00321.1-1"/>
    <property type="match status" value="1"/>
</dbReference>
<dbReference type="NCBIfam" id="NF001462">
    <property type="entry name" value="PRK00321.1-3"/>
    <property type="match status" value="1"/>
</dbReference>
<dbReference type="NCBIfam" id="NF001464">
    <property type="entry name" value="PRK00321.1-5"/>
    <property type="match status" value="1"/>
</dbReference>
<dbReference type="PANTHER" id="PTHR38103">
    <property type="entry name" value="RECOMBINATION-ASSOCIATED PROTEIN RDGC"/>
    <property type="match status" value="1"/>
</dbReference>
<dbReference type="PANTHER" id="PTHR38103:SF1">
    <property type="entry name" value="RECOMBINATION-ASSOCIATED PROTEIN RDGC"/>
    <property type="match status" value="1"/>
</dbReference>
<dbReference type="Pfam" id="PF04381">
    <property type="entry name" value="RdgC"/>
    <property type="match status" value="1"/>
</dbReference>
<name>RDGC_ECO81</name>
<accession>B7MPF4</accession>
<gene>
    <name evidence="1" type="primary">rdgC</name>
    <name type="ordered locus">ECED1_0416</name>
</gene>
<proteinExistence type="inferred from homology"/>
<comment type="function">
    <text evidence="1">May be involved in recombination.</text>
</comment>
<comment type="subcellular location">
    <subcellularLocation>
        <location evidence="1">Cytoplasm</location>
        <location evidence="1">Nucleoid</location>
    </subcellularLocation>
</comment>
<comment type="similarity">
    <text evidence="1">Belongs to the RdgC family.</text>
</comment>